<protein>
    <recommendedName>
        <fullName evidence="1">Tol-Pal system protein TolB</fullName>
    </recommendedName>
</protein>
<gene>
    <name evidence="1" type="primary">tolB</name>
    <name type="ordered locus">STY0794</name>
    <name type="ordered locus">t2128</name>
</gene>
<keyword id="KW-0131">Cell cycle</keyword>
<keyword id="KW-0132">Cell division</keyword>
<keyword id="KW-0574">Periplasm</keyword>
<keyword id="KW-0732">Signal</keyword>
<evidence type="ECO:0000255" key="1">
    <source>
        <dbReference type="HAMAP-Rule" id="MF_00671"/>
    </source>
</evidence>
<reference key="1">
    <citation type="journal article" date="2001" name="Nature">
        <title>Complete genome sequence of a multiple drug resistant Salmonella enterica serovar Typhi CT18.</title>
        <authorList>
            <person name="Parkhill J."/>
            <person name="Dougan G."/>
            <person name="James K.D."/>
            <person name="Thomson N.R."/>
            <person name="Pickard D."/>
            <person name="Wain J."/>
            <person name="Churcher C.M."/>
            <person name="Mungall K.L."/>
            <person name="Bentley S.D."/>
            <person name="Holden M.T.G."/>
            <person name="Sebaihia M."/>
            <person name="Baker S."/>
            <person name="Basham D."/>
            <person name="Brooks K."/>
            <person name="Chillingworth T."/>
            <person name="Connerton P."/>
            <person name="Cronin A."/>
            <person name="Davis P."/>
            <person name="Davies R.M."/>
            <person name="Dowd L."/>
            <person name="White N."/>
            <person name="Farrar J."/>
            <person name="Feltwell T."/>
            <person name="Hamlin N."/>
            <person name="Haque A."/>
            <person name="Hien T.T."/>
            <person name="Holroyd S."/>
            <person name="Jagels K."/>
            <person name="Krogh A."/>
            <person name="Larsen T.S."/>
            <person name="Leather S."/>
            <person name="Moule S."/>
            <person name="O'Gaora P."/>
            <person name="Parry C."/>
            <person name="Quail M.A."/>
            <person name="Rutherford K.M."/>
            <person name="Simmonds M."/>
            <person name="Skelton J."/>
            <person name="Stevens K."/>
            <person name="Whitehead S."/>
            <person name="Barrell B.G."/>
        </authorList>
    </citation>
    <scope>NUCLEOTIDE SEQUENCE [LARGE SCALE GENOMIC DNA]</scope>
    <source>
        <strain>CT18</strain>
    </source>
</reference>
<reference key="2">
    <citation type="journal article" date="2003" name="J. Bacteriol.">
        <title>Comparative genomics of Salmonella enterica serovar Typhi strains Ty2 and CT18.</title>
        <authorList>
            <person name="Deng W."/>
            <person name="Liou S.-R."/>
            <person name="Plunkett G. III"/>
            <person name="Mayhew G.F."/>
            <person name="Rose D.J."/>
            <person name="Burland V."/>
            <person name="Kodoyianni V."/>
            <person name="Schwartz D.C."/>
            <person name="Blattner F.R."/>
        </authorList>
    </citation>
    <scope>NUCLEOTIDE SEQUENCE [LARGE SCALE GENOMIC DNA]</scope>
    <source>
        <strain>ATCC 700931 / Ty2</strain>
    </source>
</reference>
<organism>
    <name type="scientific">Salmonella typhi</name>
    <dbReference type="NCBI Taxonomy" id="90370"/>
    <lineage>
        <taxon>Bacteria</taxon>
        <taxon>Pseudomonadati</taxon>
        <taxon>Pseudomonadota</taxon>
        <taxon>Gammaproteobacteria</taxon>
        <taxon>Enterobacterales</taxon>
        <taxon>Enterobacteriaceae</taxon>
        <taxon>Salmonella</taxon>
    </lineage>
</organism>
<feature type="signal peptide" evidence="1">
    <location>
        <begin position="1"/>
        <end position="21"/>
    </location>
</feature>
<feature type="chain" id="PRO_0000034684" description="Tol-Pal system protein TolB" evidence="1">
    <location>
        <begin position="22"/>
        <end position="430"/>
    </location>
</feature>
<accession>Q8Z8C0</accession>
<proteinExistence type="inferred from homology"/>
<name>TOLB_SALTI</name>
<comment type="function">
    <text evidence="1">Part of the Tol-Pal system, which plays a role in outer membrane invagination during cell division and is important for maintaining outer membrane integrity. TolB occupies a key intermediary position in the Tol-Pal system because it communicates directly with both membrane-embedded components, Pal in the outer membrane and TolA in the inner membrane.</text>
</comment>
<comment type="subunit">
    <text evidence="1">The Tol-Pal system is composed of five core proteins: the inner membrane proteins TolA, TolQ and TolR, the periplasmic protein TolB and the outer membrane protein Pal. They form a network linking the inner and outer membranes and the peptidoglycan layer.</text>
</comment>
<comment type="subcellular location">
    <subcellularLocation>
        <location evidence="1">Periplasm</location>
    </subcellularLocation>
</comment>
<comment type="similarity">
    <text evidence="1">Belongs to the TolB family.</text>
</comment>
<dbReference type="EMBL" id="AL513382">
    <property type="protein sequence ID" value="CAD05210.1"/>
    <property type="molecule type" value="Genomic_DNA"/>
</dbReference>
<dbReference type="EMBL" id="AE014613">
    <property type="protein sequence ID" value="AAO69742.1"/>
    <property type="molecule type" value="Genomic_DNA"/>
</dbReference>
<dbReference type="RefSeq" id="NP_455304.1">
    <property type="nucleotide sequence ID" value="NC_003198.1"/>
</dbReference>
<dbReference type="RefSeq" id="WP_010989131.1">
    <property type="nucleotide sequence ID" value="NZ_WSUR01000015.1"/>
</dbReference>
<dbReference type="SMR" id="Q8Z8C0"/>
<dbReference type="STRING" id="220341.gene:17584797"/>
<dbReference type="KEGG" id="stt:t2128"/>
<dbReference type="KEGG" id="sty:STY0794"/>
<dbReference type="PATRIC" id="fig|220341.7.peg.799"/>
<dbReference type="eggNOG" id="COG0823">
    <property type="taxonomic scope" value="Bacteria"/>
</dbReference>
<dbReference type="HOGENOM" id="CLU_047123_0_0_6"/>
<dbReference type="OMA" id="VREPSWG"/>
<dbReference type="OrthoDB" id="9802240at2"/>
<dbReference type="Proteomes" id="UP000000541">
    <property type="component" value="Chromosome"/>
</dbReference>
<dbReference type="Proteomes" id="UP000002670">
    <property type="component" value="Chromosome"/>
</dbReference>
<dbReference type="GO" id="GO:0042597">
    <property type="term" value="C:periplasmic space"/>
    <property type="evidence" value="ECO:0007669"/>
    <property type="project" value="UniProtKB-SubCell"/>
</dbReference>
<dbReference type="GO" id="GO:0051301">
    <property type="term" value="P:cell division"/>
    <property type="evidence" value="ECO:0007669"/>
    <property type="project" value="UniProtKB-UniRule"/>
</dbReference>
<dbReference type="GO" id="GO:0017038">
    <property type="term" value="P:protein import"/>
    <property type="evidence" value="ECO:0007669"/>
    <property type="project" value="InterPro"/>
</dbReference>
<dbReference type="FunFam" id="2.120.10.30:FF:000022">
    <property type="entry name" value="Tol-Pal system protein TolB"/>
    <property type="match status" value="1"/>
</dbReference>
<dbReference type="FunFam" id="3.40.50.10070:FF:000001">
    <property type="entry name" value="Tol-Pal system protein TolB"/>
    <property type="match status" value="1"/>
</dbReference>
<dbReference type="Gene3D" id="2.120.10.30">
    <property type="entry name" value="TolB, C-terminal domain"/>
    <property type="match status" value="1"/>
</dbReference>
<dbReference type="Gene3D" id="3.40.50.10070">
    <property type="entry name" value="TolB, N-terminal domain"/>
    <property type="match status" value="1"/>
</dbReference>
<dbReference type="HAMAP" id="MF_00671">
    <property type="entry name" value="TolB"/>
    <property type="match status" value="1"/>
</dbReference>
<dbReference type="InterPro" id="IPR011042">
    <property type="entry name" value="6-blade_b-propeller_TolB-like"/>
</dbReference>
<dbReference type="InterPro" id="IPR011659">
    <property type="entry name" value="PD40"/>
</dbReference>
<dbReference type="InterPro" id="IPR014167">
    <property type="entry name" value="Tol-Pal_TolB"/>
</dbReference>
<dbReference type="InterPro" id="IPR007195">
    <property type="entry name" value="TolB_N"/>
</dbReference>
<dbReference type="NCBIfam" id="TIGR02800">
    <property type="entry name" value="propeller_TolB"/>
    <property type="match status" value="1"/>
</dbReference>
<dbReference type="PANTHER" id="PTHR36842:SF1">
    <property type="entry name" value="PROTEIN TOLB"/>
    <property type="match status" value="1"/>
</dbReference>
<dbReference type="PANTHER" id="PTHR36842">
    <property type="entry name" value="PROTEIN TOLB HOMOLOG"/>
    <property type="match status" value="1"/>
</dbReference>
<dbReference type="Pfam" id="PF07676">
    <property type="entry name" value="PD40"/>
    <property type="match status" value="4"/>
</dbReference>
<dbReference type="Pfam" id="PF04052">
    <property type="entry name" value="TolB_N"/>
    <property type="match status" value="1"/>
</dbReference>
<dbReference type="SUPFAM" id="SSF52964">
    <property type="entry name" value="TolB, N-terminal domain"/>
    <property type="match status" value="1"/>
</dbReference>
<dbReference type="SUPFAM" id="SSF69304">
    <property type="entry name" value="Tricorn protease N-terminal domain"/>
    <property type="match status" value="1"/>
</dbReference>
<sequence>MKQALRVAFGFLMLWAAVLHAEVRIEITQGVDSARPIGVVPFKWAGPGAAPEDIGGIVAADLRNSGKFNPLDRSRLPQQPATAQEVQPTAWSALGIDAVIVGLVTPNPDGSYNVAYQLVDTGGAPGTVLAQNSYKVNKQWLRYAGHTASDEVFEKLTGIKGAFRTRIAYVVQTNGGQFPYELRVSDYDGYNQFVVHRSPQPLMSPAWSPDGSKLAYVTFESGRSALVIQTLANGAVRQVASFPRHNGAPAFSPDGTKLAFALSKTGSLNLYVMDLASGQIRQITDGRSNNTEPTWFPDSQTLAFTSDQAGRPQVYKMNINGGAAQRITWEGSQNQDADVSSDGKFMVMVSSNNGQQHIAKQDLVTGGVQVLSSTFLDETPSLAPNGTMVIYSSSQGMGSVLNLVSTDGRFKARLPATDGQVKSPAWSPYL</sequence>